<proteinExistence type="inferred from homology"/>
<evidence type="ECO:0000255" key="1">
    <source>
        <dbReference type="HAMAP-Rule" id="MF_01962"/>
    </source>
</evidence>
<feature type="chain" id="PRO_1000017708" description="Adenine deaminase">
    <location>
        <begin position="1"/>
        <end position="324"/>
    </location>
</feature>
<feature type="active site" description="Proton donor" evidence="1">
    <location>
        <position position="192"/>
    </location>
</feature>
<feature type="binding site" evidence="1">
    <location>
        <position position="11"/>
    </location>
    <ligand>
        <name>Zn(2+)</name>
        <dbReference type="ChEBI" id="CHEBI:29105"/>
        <note>catalytic</note>
    </ligand>
</feature>
<feature type="binding site" evidence="1">
    <location>
        <position position="13"/>
    </location>
    <ligand>
        <name>Zn(2+)</name>
        <dbReference type="ChEBI" id="CHEBI:29105"/>
        <note>catalytic</note>
    </ligand>
</feature>
<feature type="binding site" evidence="1">
    <location>
        <position position="189"/>
    </location>
    <ligand>
        <name>Zn(2+)</name>
        <dbReference type="ChEBI" id="CHEBI:29105"/>
        <note>catalytic</note>
    </ligand>
</feature>
<feature type="binding site" evidence="1">
    <location>
        <position position="270"/>
    </location>
    <ligand>
        <name>Zn(2+)</name>
        <dbReference type="ChEBI" id="CHEBI:29105"/>
        <note>catalytic</note>
    </ligand>
</feature>
<feature type="binding site" evidence="1">
    <location>
        <position position="271"/>
    </location>
    <ligand>
        <name>substrate</name>
    </ligand>
</feature>
<feature type="site" description="Important for catalytic activity" evidence="1">
    <location>
        <position position="213"/>
    </location>
</feature>
<accession>A6UET5</accession>
<name>ADE_SINMW</name>
<keyword id="KW-0378">Hydrolase</keyword>
<keyword id="KW-0479">Metal-binding</keyword>
<keyword id="KW-0546">Nucleotide metabolism</keyword>
<keyword id="KW-0862">Zinc</keyword>
<reference key="1">
    <citation type="submission" date="2007-06" db="EMBL/GenBank/DDBJ databases">
        <title>Complete sequence of Sinorhizobium medicae WSM419 chromosome.</title>
        <authorList>
            <consortium name="US DOE Joint Genome Institute"/>
            <person name="Copeland A."/>
            <person name="Lucas S."/>
            <person name="Lapidus A."/>
            <person name="Barry K."/>
            <person name="Glavina del Rio T."/>
            <person name="Dalin E."/>
            <person name="Tice H."/>
            <person name="Pitluck S."/>
            <person name="Chain P."/>
            <person name="Malfatti S."/>
            <person name="Shin M."/>
            <person name="Vergez L."/>
            <person name="Schmutz J."/>
            <person name="Larimer F."/>
            <person name="Land M."/>
            <person name="Hauser L."/>
            <person name="Kyrpides N."/>
            <person name="Mikhailova N."/>
            <person name="Reeve W.G."/>
            <person name="Richardson P."/>
        </authorList>
    </citation>
    <scope>NUCLEOTIDE SEQUENCE [LARGE SCALE GENOMIC DNA]</scope>
    <source>
        <strain>WSM419</strain>
    </source>
</reference>
<dbReference type="EC" id="3.5.4.2" evidence="1"/>
<dbReference type="EMBL" id="CP000738">
    <property type="protein sequence ID" value="ABR62165.1"/>
    <property type="molecule type" value="Genomic_DNA"/>
</dbReference>
<dbReference type="RefSeq" id="WP_012067546.1">
    <property type="nucleotide sequence ID" value="NC_009636.1"/>
</dbReference>
<dbReference type="RefSeq" id="YP_001329000.1">
    <property type="nucleotide sequence ID" value="NC_009636.1"/>
</dbReference>
<dbReference type="SMR" id="A6UET5"/>
<dbReference type="STRING" id="366394.Smed_3344"/>
<dbReference type="KEGG" id="smd:Smed_3344"/>
<dbReference type="PATRIC" id="fig|366394.8.peg.6590"/>
<dbReference type="eggNOG" id="COG1816">
    <property type="taxonomic scope" value="Bacteria"/>
</dbReference>
<dbReference type="HOGENOM" id="CLU_039228_7_1_5"/>
<dbReference type="OrthoDB" id="105475at2"/>
<dbReference type="Proteomes" id="UP000001108">
    <property type="component" value="Chromosome"/>
</dbReference>
<dbReference type="GO" id="GO:0000034">
    <property type="term" value="F:adenine deaminase activity"/>
    <property type="evidence" value="ECO:0007669"/>
    <property type="project" value="UniProtKB-UniRule"/>
</dbReference>
<dbReference type="GO" id="GO:0008270">
    <property type="term" value="F:zinc ion binding"/>
    <property type="evidence" value="ECO:0007669"/>
    <property type="project" value="UniProtKB-UniRule"/>
</dbReference>
<dbReference type="GO" id="GO:0006146">
    <property type="term" value="P:adenine catabolic process"/>
    <property type="evidence" value="ECO:0007669"/>
    <property type="project" value="UniProtKB-UniRule"/>
</dbReference>
<dbReference type="GO" id="GO:0043103">
    <property type="term" value="P:hypoxanthine salvage"/>
    <property type="evidence" value="ECO:0007669"/>
    <property type="project" value="UniProtKB-UniRule"/>
</dbReference>
<dbReference type="GO" id="GO:0009117">
    <property type="term" value="P:nucleotide metabolic process"/>
    <property type="evidence" value="ECO:0007669"/>
    <property type="project" value="UniProtKB-KW"/>
</dbReference>
<dbReference type="CDD" id="cd01320">
    <property type="entry name" value="ADA"/>
    <property type="match status" value="1"/>
</dbReference>
<dbReference type="Gene3D" id="3.20.20.140">
    <property type="entry name" value="Metal-dependent hydrolases"/>
    <property type="match status" value="1"/>
</dbReference>
<dbReference type="HAMAP" id="MF_01962">
    <property type="entry name" value="Adenine_deaminase"/>
    <property type="match status" value="1"/>
</dbReference>
<dbReference type="InterPro" id="IPR001365">
    <property type="entry name" value="A_deaminase_dom"/>
</dbReference>
<dbReference type="InterPro" id="IPR028892">
    <property type="entry name" value="ADE"/>
</dbReference>
<dbReference type="InterPro" id="IPR006330">
    <property type="entry name" value="Ado/ade_deaminase"/>
</dbReference>
<dbReference type="InterPro" id="IPR032466">
    <property type="entry name" value="Metal_Hydrolase"/>
</dbReference>
<dbReference type="NCBIfam" id="TIGR01430">
    <property type="entry name" value="aden_deam"/>
    <property type="match status" value="1"/>
</dbReference>
<dbReference type="NCBIfam" id="NF006848">
    <property type="entry name" value="PRK09358.1-3"/>
    <property type="match status" value="1"/>
</dbReference>
<dbReference type="PANTHER" id="PTHR43114">
    <property type="entry name" value="ADENINE DEAMINASE"/>
    <property type="match status" value="1"/>
</dbReference>
<dbReference type="PANTHER" id="PTHR43114:SF6">
    <property type="entry name" value="ADENINE DEAMINASE"/>
    <property type="match status" value="1"/>
</dbReference>
<dbReference type="Pfam" id="PF00962">
    <property type="entry name" value="A_deaminase"/>
    <property type="match status" value="1"/>
</dbReference>
<dbReference type="SUPFAM" id="SSF51556">
    <property type="entry name" value="Metallo-dependent hydrolases"/>
    <property type="match status" value="1"/>
</dbReference>
<organism>
    <name type="scientific">Sinorhizobium medicae (strain WSM419)</name>
    <name type="common">Ensifer medicae</name>
    <dbReference type="NCBI Taxonomy" id="366394"/>
    <lineage>
        <taxon>Bacteria</taxon>
        <taxon>Pseudomonadati</taxon>
        <taxon>Pseudomonadota</taxon>
        <taxon>Alphaproteobacteria</taxon>
        <taxon>Hyphomicrobiales</taxon>
        <taxon>Rhizobiaceae</taxon>
        <taxon>Sinorhizobium/Ensifer group</taxon>
        <taxon>Sinorhizobium</taxon>
    </lineage>
</organism>
<comment type="function">
    <text evidence="1">Catalyzes the hydrolytic deamination of adenine to hypoxanthine. Plays an important role in the purine salvage pathway and in nitrogen catabolism.</text>
</comment>
<comment type="catalytic activity">
    <reaction evidence="1">
        <text>adenine + H2O + H(+) = hypoxanthine + NH4(+)</text>
        <dbReference type="Rhea" id="RHEA:23688"/>
        <dbReference type="ChEBI" id="CHEBI:15377"/>
        <dbReference type="ChEBI" id="CHEBI:15378"/>
        <dbReference type="ChEBI" id="CHEBI:16708"/>
        <dbReference type="ChEBI" id="CHEBI:17368"/>
        <dbReference type="ChEBI" id="CHEBI:28938"/>
        <dbReference type="EC" id="3.5.4.2"/>
    </reaction>
</comment>
<comment type="cofactor">
    <cofactor evidence="1">
        <name>Zn(2+)</name>
        <dbReference type="ChEBI" id="CHEBI:29105"/>
    </cofactor>
    <text evidence="1">Binds 1 zinc ion per subunit.</text>
</comment>
<comment type="similarity">
    <text evidence="1">Belongs to the metallo-dependent hydrolases superfamily. Adenosine and AMP deaminases family. Adenine deaminase type 2 subfamily.</text>
</comment>
<gene>
    <name type="ordered locus">Smed_3344</name>
</gene>
<sequence length="324" mass="35291">MTAHLKKAELHCHIEGATPPELAVRQARKYGVDTGTIIRDGAYVWEDFTSFVKCYDAVASLFRTEGDYALLAEAYLTELAEAGTIYSEIIVSPDHGNTVGLGADAYLEGLAAGMEAAKARKGIESRMLITGIRHLGPEAVVRTAEYAASHRHPLVTGFNLAGEERMHSVAEFSRAFDIVRDAGLGLTIHAGELSGAFSVRDALDHVRPARISHGVRAIEDTDLVRRLADEGVVLEVCPGSNIALKVFPDFPSHPLRRLYDAGVRVTLNSDDPPFFHTSLAQEYEIAAHAMGFSDGEIDRMTRTALEAAFVDEPTRERLLAALHI</sequence>
<protein>
    <recommendedName>
        <fullName evidence="1">Adenine deaminase</fullName>
        <shortName evidence="1">ADE</shortName>
        <ecNumber evidence="1">3.5.4.2</ecNumber>
    </recommendedName>
    <alternativeName>
        <fullName evidence="1">Adenine aminohydrolase</fullName>
        <shortName evidence="1">AAH</shortName>
    </alternativeName>
</protein>